<keyword id="KW-0002">3D-structure</keyword>
<keyword id="KW-1003">Cell membrane</keyword>
<keyword id="KW-0472">Membrane</keyword>
<keyword id="KW-1185">Reference proteome</keyword>
<keyword id="KW-0812">Transmembrane</keyword>
<keyword id="KW-1133">Transmembrane helix</keyword>
<keyword id="KW-0843">Virulence</keyword>
<feature type="chain" id="PRO_0000129109" description="Surface presentation of antigens protein SpaQ">
    <location>
        <begin position="1"/>
        <end position="86"/>
    </location>
</feature>
<feature type="transmembrane region" description="Helical" evidence="1">
    <location>
        <begin position="16"/>
        <end position="36"/>
    </location>
</feature>
<feature type="transmembrane region" description="Helical" evidence="1">
    <location>
        <begin position="53"/>
        <end position="73"/>
    </location>
</feature>
<evidence type="ECO:0000255" key="1"/>
<evidence type="ECO:0000305" key="2"/>
<protein>
    <recommendedName>
        <fullName>Surface presentation of antigens protein SpaQ</fullName>
    </recommendedName>
</protein>
<gene>
    <name type="primary">spaQ</name>
    <name type="ordered locus">STM2889</name>
</gene>
<dbReference type="EMBL" id="X73525">
    <property type="status" value="NOT_ANNOTATED_CDS"/>
    <property type="molecule type" value="Genomic_DNA"/>
</dbReference>
<dbReference type="EMBL" id="U29364">
    <property type="protein sequence ID" value="AAC43865.1"/>
    <property type="molecule type" value="Genomic_DNA"/>
</dbReference>
<dbReference type="EMBL" id="AE006468">
    <property type="protein sequence ID" value="AAL21769.1"/>
    <property type="molecule type" value="Genomic_DNA"/>
</dbReference>
<dbReference type="RefSeq" id="NP_461810.1">
    <property type="nucleotide sequence ID" value="NC_003197.2"/>
</dbReference>
<dbReference type="RefSeq" id="WP_000342503.1">
    <property type="nucleotide sequence ID" value="NC_003197.2"/>
</dbReference>
<dbReference type="PDB" id="6PEM">
    <property type="method" value="EM"/>
    <property type="resolution" value="3.50 A"/>
    <property type="chains" value="6/7/8/9=1-86"/>
</dbReference>
<dbReference type="PDB" id="6PEP">
    <property type="method" value="EM"/>
    <property type="resolution" value="3.80 A"/>
    <property type="chains" value="6/7/8/9=1-86"/>
</dbReference>
<dbReference type="PDB" id="6Q14">
    <property type="method" value="EM"/>
    <property type="resolution" value="3.80 A"/>
    <property type="chains" value="6/7/8/9=1-86"/>
</dbReference>
<dbReference type="PDB" id="6Q15">
    <property type="method" value="EM"/>
    <property type="resolution" value="5.15 A"/>
    <property type="chains" value="6/7/8/9=1-86"/>
</dbReference>
<dbReference type="PDB" id="6Q16">
    <property type="method" value="EM"/>
    <property type="resolution" value="4.10 A"/>
    <property type="chains" value="6/7/8/9=1-86"/>
</dbReference>
<dbReference type="PDB" id="7AGX">
    <property type="method" value="EM"/>
    <property type="resolution" value="3.60 A"/>
    <property type="chains" value="1G/1H/1I/1J=1-86"/>
</dbReference>
<dbReference type="PDB" id="7AH9">
    <property type="method" value="EM"/>
    <property type="resolution" value="3.30 A"/>
    <property type="chains" value="1G/1H/1I/1J=1-86"/>
</dbReference>
<dbReference type="PDB" id="7AHI">
    <property type="method" value="EM"/>
    <property type="resolution" value="3.30 A"/>
    <property type="chains" value="1G/1H/1I/1J=1-86"/>
</dbReference>
<dbReference type="PDBsum" id="6PEM"/>
<dbReference type="PDBsum" id="6PEP"/>
<dbReference type="PDBsum" id="6Q14"/>
<dbReference type="PDBsum" id="6Q15"/>
<dbReference type="PDBsum" id="6Q16"/>
<dbReference type="PDBsum" id="7AGX"/>
<dbReference type="PDBsum" id="7AH9"/>
<dbReference type="PDBsum" id="7AHI"/>
<dbReference type="EMDB" id="EMD-11780"/>
<dbReference type="EMDB" id="EMD-11781"/>
<dbReference type="EMDB" id="EMD-20556"/>
<dbReference type="SMR" id="P0A1L7"/>
<dbReference type="DIP" id="DIP-59560N"/>
<dbReference type="IntAct" id="P0A1L7">
    <property type="interactions" value="2"/>
</dbReference>
<dbReference type="STRING" id="99287.STM2889"/>
<dbReference type="PaxDb" id="99287-STM2889"/>
<dbReference type="GeneID" id="1254412"/>
<dbReference type="KEGG" id="stm:STM2889"/>
<dbReference type="PATRIC" id="fig|99287.12.peg.3045"/>
<dbReference type="HOGENOM" id="CLU_164516_1_2_6"/>
<dbReference type="OMA" id="GWYGETL"/>
<dbReference type="PhylomeDB" id="P0A1L7"/>
<dbReference type="BioCyc" id="SENT99287:STM2889-MONOMER"/>
<dbReference type="Proteomes" id="UP000001014">
    <property type="component" value="Chromosome"/>
</dbReference>
<dbReference type="GO" id="GO:0005886">
    <property type="term" value="C:plasma membrane"/>
    <property type="evidence" value="ECO:0007669"/>
    <property type="project" value="UniProtKB-SubCell"/>
</dbReference>
<dbReference type="GO" id="GO:0044780">
    <property type="term" value="P:bacterial-type flagellum assembly"/>
    <property type="evidence" value="ECO:0000318"/>
    <property type="project" value="GO_Central"/>
</dbReference>
<dbReference type="GO" id="GO:0009306">
    <property type="term" value="P:protein secretion"/>
    <property type="evidence" value="ECO:0007669"/>
    <property type="project" value="InterPro"/>
</dbReference>
<dbReference type="InterPro" id="IPR002191">
    <property type="entry name" value="Bac_export_3"/>
</dbReference>
<dbReference type="InterPro" id="IPR006306">
    <property type="entry name" value="T3SS_HrpO"/>
</dbReference>
<dbReference type="NCBIfam" id="TIGR01403">
    <property type="entry name" value="fliQ_rel_III"/>
    <property type="match status" value="1"/>
</dbReference>
<dbReference type="NCBIfam" id="NF011861">
    <property type="entry name" value="PRK15333.1"/>
    <property type="match status" value="1"/>
</dbReference>
<dbReference type="PANTHER" id="PTHR34040">
    <property type="entry name" value="FLAGELLAR BIOSYNTHETIC PROTEIN FLIQ"/>
    <property type="match status" value="1"/>
</dbReference>
<dbReference type="PANTHER" id="PTHR34040:SF7">
    <property type="entry name" value="SURFACE PRESENTATION OF ANTIGENS PROTEIN SPAQ"/>
    <property type="match status" value="1"/>
</dbReference>
<dbReference type="Pfam" id="PF01313">
    <property type="entry name" value="Bac_export_3"/>
    <property type="match status" value="1"/>
</dbReference>
<dbReference type="PRINTS" id="PR00952">
    <property type="entry name" value="TYPE3IMQPROT"/>
</dbReference>
<comment type="function">
    <text>Involved in a secretory pathway responsible for the surface presentation of determinants needed for the entry of Salmonella species into mammalian cells.</text>
</comment>
<comment type="subcellular location">
    <subcellularLocation>
        <location evidence="2">Cell membrane</location>
        <topology evidence="2">Multi-pass membrane protein</topology>
    </subcellularLocation>
</comment>
<comment type="similarity">
    <text evidence="2">Belongs to the FliQ/MopD/SpaQ family.</text>
</comment>
<reference key="1">
    <citation type="journal article" date="1993" name="EMBO J.">
        <title>Cognate gene clusters govern invasion of host epithelial cells by Salmonella typhimurium and Shigella flexneri.</title>
        <authorList>
            <person name="Groisman E.A."/>
            <person name="Ochman H."/>
        </authorList>
    </citation>
    <scope>NUCLEOTIDE SEQUENCE [GENOMIC DNA]</scope>
</reference>
<reference key="2">
    <citation type="journal article" date="1995" name="Proc. Natl. Acad. Sci. U.S.A.">
        <title>Relationship between evolutionary rate and cellular location among the Inv/Spa invasion proteins of Salmonella enterica.</title>
        <authorList>
            <person name="Li J."/>
            <person name="Ochman H."/>
            <person name="Groisman E.A."/>
            <person name="Boyd E.F."/>
            <person name="Solomon F."/>
            <person name="Nelson K."/>
            <person name="Selander R.K."/>
        </authorList>
    </citation>
    <scope>NUCLEOTIDE SEQUENCE [GENOMIC DNA]</scope>
    <source>
        <strain>S4194</strain>
    </source>
</reference>
<reference key="3">
    <citation type="journal article" date="2001" name="Nature">
        <title>Complete genome sequence of Salmonella enterica serovar Typhimurium LT2.</title>
        <authorList>
            <person name="McClelland M."/>
            <person name="Sanderson K.E."/>
            <person name="Spieth J."/>
            <person name="Clifton S.W."/>
            <person name="Latreille P."/>
            <person name="Courtney L."/>
            <person name="Porwollik S."/>
            <person name="Ali J."/>
            <person name="Dante M."/>
            <person name="Du F."/>
            <person name="Hou S."/>
            <person name="Layman D."/>
            <person name="Leonard S."/>
            <person name="Nguyen C."/>
            <person name="Scott K."/>
            <person name="Holmes A."/>
            <person name="Grewal N."/>
            <person name="Mulvaney E."/>
            <person name="Ryan E."/>
            <person name="Sun H."/>
            <person name="Florea L."/>
            <person name="Miller W."/>
            <person name="Stoneking T."/>
            <person name="Nhan M."/>
            <person name="Waterston R."/>
            <person name="Wilson R.K."/>
        </authorList>
    </citation>
    <scope>NUCLEOTIDE SEQUENCE [LARGE SCALE GENOMIC DNA]</scope>
    <source>
        <strain>LT2 / SGSC1412 / ATCC 700720</strain>
    </source>
</reference>
<organism>
    <name type="scientific">Salmonella typhimurium (strain LT2 / SGSC1412 / ATCC 700720)</name>
    <dbReference type="NCBI Taxonomy" id="99287"/>
    <lineage>
        <taxon>Bacteria</taxon>
        <taxon>Pseudomonadati</taxon>
        <taxon>Pseudomonadota</taxon>
        <taxon>Gammaproteobacteria</taxon>
        <taxon>Enterobacterales</taxon>
        <taxon>Enterobacteriaceae</taxon>
        <taxon>Salmonella</taxon>
    </lineage>
</organism>
<sequence>MDDLVFAGNKALYLVLILSGWPTIVATIIGLLVGLFQTVTQLQEQTLPFGIKLLGVCLCLFLLSGWYGEVLLSYGRQVIFLALAKG</sequence>
<name>SPAQ_SALTY</name>
<proteinExistence type="evidence at protein level"/>
<accession>P0A1L7</accession>
<accession>P40704</accession>
<accession>Q54011</accession>
<accession>Q54013</accession>
<accession>Q57117</accession>
<accession>Q57533</accession>